<reference key="1">
    <citation type="journal article" date="2002" name="Plant Mol. Biol.">
        <title>Molecular cloning and characterization of RAD51-like genes from Arabidopsis thaliana.</title>
        <authorList>
            <person name="Osakabe K."/>
            <person name="Yoshioka T."/>
            <person name="Ichikawa H."/>
            <person name="Toki S."/>
        </authorList>
    </citation>
    <scope>NUCLEOTIDE SEQUENCE [MRNA]</scope>
    <scope>INDUCTION</scope>
    <scope>TISSUE SPECIFICITY</scope>
    <scope>INTERACTION WITH RAD51C</scope>
    <source>
        <strain>cv. Columbia</strain>
        <tissue>Flower bud</tissue>
    </source>
</reference>
<reference key="2">
    <citation type="submission" date="2001-07" db="EMBL/GenBank/DDBJ databases">
        <authorList>
            <person name="Siaud N."/>
        </authorList>
    </citation>
    <scope>NUCLEOTIDE SEQUENCE</scope>
    <source>
        <strain>cv. Columbia</strain>
    </source>
</reference>
<reference key="3">
    <citation type="submission" date="2001-04" db="EMBL/GenBank/DDBJ databases">
        <title>Cloning and characterization of the gene encoding DNA repair protein XRCC3 from Arabidopsis thaliana.</title>
        <authorList>
            <person name="Kim J."/>
            <person name="Kmiec E."/>
        </authorList>
    </citation>
    <scope>NUCLEOTIDE SEQUENCE</scope>
</reference>
<reference key="4">
    <citation type="journal article" date="1998" name="DNA Res.">
        <title>Structural analysis of Arabidopsis thaliana chromosome 5. V. Sequence features of the regions of 1,381,565 bp covered by twenty one physically assigned P1 and TAC clones.</title>
        <authorList>
            <person name="Kaneko T."/>
            <person name="Kotani H."/>
            <person name="Nakamura Y."/>
            <person name="Sato S."/>
            <person name="Asamizu E."/>
            <person name="Miyajima N."/>
            <person name="Tabata S."/>
        </authorList>
    </citation>
    <scope>NUCLEOTIDE SEQUENCE [LARGE SCALE GENOMIC DNA]</scope>
    <source>
        <strain>cv. Columbia</strain>
    </source>
</reference>
<reference key="5">
    <citation type="journal article" date="2017" name="Plant J.">
        <title>Araport11: a complete reannotation of the Arabidopsis thaliana reference genome.</title>
        <authorList>
            <person name="Cheng C.Y."/>
            <person name="Krishnakumar V."/>
            <person name="Chan A.P."/>
            <person name="Thibaud-Nissen F."/>
            <person name="Schobel S."/>
            <person name="Town C.D."/>
        </authorList>
    </citation>
    <scope>GENOME REANNOTATION</scope>
    <source>
        <strain>cv. Columbia</strain>
    </source>
</reference>
<reference key="6">
    <citation type="journal article" date="2004" name="EMBO J.">
        <title>The Arabidopsis homologue of Xrcc3 plays an essential role in meiosis.</title>
        <authorList>
            <person name="Bleuyard J.-Y."/>
            <person name="White C.I."/>
        </authorList>
    </citation>
    <scope>FUNCTION</scope>
</reference>
<proteinExistence type="evidence at protein level"/>
<name>XRCC3_ARATH</name>
<evidence type="ECO:0000255" key="1"/>
<evidence type="ECO:0000269" key="2">
    <source>
    </source>
</evidence>
<evidence type="ECO:0000269" key="3">
    <source>
    </source>
</evidence>
<evidence type="ECO:0000305" key="4"/>
<comment type="function">
    <text evidence="3">Plays essential roles in DNA damage repair in both somatic and meiotic cells. It is important for postsynaptic events following pachytene in meiosis. It is also required for DNA cross-links repair and is involved in double strand breaks (DSBs) repair.</text>
</comment>
<comment type="subunit">
    <text evidence="2">Interacts with RAD51C.</text>
</comment>
<comment type="subcellular location">
    <subcellularLocation>
        <location evidence="4">Nucleus</location>
    </subcellularLocation>
</comment>
<comment type="tissue specificity">
    <text evidence="2">Detected in various tissues. More expressed in reproductive tissues than in vegetative tissues, with the highest level in young flower buds.</text>
</comment>
<comment type="induction">
    <text evidence="2">By genotoxic stress and by DNA damage.</text>
</comment>
<comment type="similarity">
    <text evidence="4">Belongs to the RecA family. RAD51 subfamily.</text>
</comment>
<dbReference type="EMBL" id="AB062455">
    <property type="protein sequence ID" value="BAB64342.1"/>
    <property type="molecule type" value="mRNA"/>
</dbReference>
<dbReference type="EMBL" id="AB073492">
    <property type="protein sequence ID" value="BAB70684.1"/>
    <property type="molecule type" value="mRNA"/>
</dbReference>
<dbReference type="EMBL" id="AJ438908">
    <property type="protein sequence ID" value="CAD27641.1"/>
    <property type="molecule type" value="mRNA"/>
</dbReference>
<dbReference type="EMBL" id="AJ438909">
    <property type="protein sequence ID" value="CAD27642.1"/>
    <property type="molecule type" value="Genomic_DNA"/>
</dbReference>
<dbReference type="EMBL" id="AY032998">
    <property type="protein sequence ID" value="AAK54457.1"/>
    <property type="molecule type" value="Genomic_DNA"/>
</dbReference>
<dbReference type="EMBL" id="AB011482">
    <property type="protein sequence ID" value="BAB08781.1"/>
    <property type="molecule type" value="Genomic_DNA"/>
</dbReference>
<dbReference type="EMBL" id="CP002688">
    <property type="protein sequence ID" value="AED96903.1"/>
    <property type="molecule type" value="Genomic_DNA"/>
</dbReference>
<dbReference type="EMBL" id="CP002688">
    <property type="protein sequence ID" value="AED96904.1"/>
    <property type="molecule type" value="Genomic_DNA"/>
</dbReference>
<dbReference type="RefSeq" id="NP_200554.1">
    <property type="nucleotide sequence ID" value="NM_125127.3"/>
</dbReference>
<dbReference type="RefSeq" id="NP_851202.1">
    <property type="nucleotide sequence ID" value="NM_180871.2"/>
</dbReference>
<dbReference type="SMR" id="Q9FKM5"/>
<dbReference type="BioGRID" id="21094">
    <property type="interactions" value="1"/>
</dbReference>
<dbReference type="FunCoup" id="Q9FKM5">
    <property type="interactions" value="1542"/>
</dbReference>
<dbReference type="STRING" id="3702.Q9FKM5"/>
<dbReference type="iPTMnet" id="Q9FKM5"/>
<dbReference type="PaxDb" id="3702-AT5G57450.1"/>
<dbReference type="EnsemblPlants" id="AT5G57450.1">
    <property type="protein sequence ID" value="AT5G57450.1"/>
    <property type="gene ID" value="AT5G57450"/>
</dbReference>
<dbReference type="EnsemblPlants" id="AT5G57450.2">
    <property type="protein sequence ID" value="AT5G57450.2"/>
    <property type="gene ID" value="AT5G57450"/>
</dbReference>
<dbReference type="GeneID" id="835850"/>
<dbReference type="Gramene" id="AT5G57450.1">
    <property type="protein sequence ID" value="AT5G57450.1"/>
    <property type="gene ID" value="AT5G57450"/>
</dbReference>
<dbReference type="Gramene" id="AT5G57450.2">
    <property type="protein sequence ID" value="AT5G57450.2"/>
    <property type="gene ID" value="AT5G57450"/>
</dbReference>
<dbReference type="KEGG" id="ath:AT5G57450"/>
<dbReference type="Araport" id="AT5G57450"/>
<dbReference type="TAIR" id="AT5G57450">
    <property type="gene designation" value="XRCC3"/>
</dbReference>
<dbReference type="eggNOG" id="KOG1564">
    <property type="taxonomic scope" value="Eukaryota"/>
</dbReference>
<dbReference type="HOGENOM" id="CLU_041732_1_0_1"/>
<dbReference type="InParanoid" id="Q9FKM5"/>
<dbReference type="OMA" id="WANQVTV"/>
<dbReference type="OrthoDB" id="1861185at2759"/>
<dbReference type="PhylomeDB" id="Q9FKM5"/>
<dbReference type="PRO" id="PR:Q9FKM5"/>
<dbReference type="Proteomes" id="UP000006548">
    <property type="component" value="Chromosome 5"/>
</dbReference>
<dbReference type="ExpressionAtlas" id="Q9FKM5">
    <property type="expression patterns" value="baseline and differential"/>
</dbReference>
<dbReference type="GO" id="GO:0005634">
    <property type="term" value="C:nucleus"/>
    <property type="evidence" value="ECO:0007669"/>
    <property type="project" value="UniProtKB-SubCell"/>
</dbReference>
<dbReference type="GO" id="GO:0005524">
    <property type="term" value="F:ATP binding"/>
    <property type="evidence" value="ECO:0007669"/>
    <property type="project" value="UniProtKB-KW"/>
</dbReference>
<dbReference type="GO" id="GO:0140664">
    <property type="term" value="F:ATP-dependent DNA damage sensor activity"/>
    <property type="evidence" value="ECO:0007669"/>
    <property type="project" value="InterPro"/>
</dbReference>
<dbReference type="GO" id="GO:0003697">
    <property type="term" value="F:single-stranded DNA binding"/>
    <property type="evidence" value="ECO:0000250"/>
    <property type="project" value="TAIR"/>
</dbReference>
<dbReference type="GO" id="GO:0006302">
    <property type="term" value="P:double-strand break repair"/>
    <property type="evidence" value="ECO:0000315"/>
    <property type="project" value="TAIR"/>
</dbReference>
<dbReference type="GO" id="GO:0045003">
    <property type="term" value="P:double-strand break repair via synthesis-dependent strand annealing"/>
    <property type="evidence" value="ECO:0000314"/>
    <property type="project" value="TAIR"/>
</dbReference>
<dbReference type="GO" id="GO:0051321">
    <property type="term" value="P:meiotic cell cycle"/>
    <property type="evidence" value="ECO:0000315"/>
    <property type="project" value="TAIR"/>
</dbReference>
<dbReference type="CDD" id="cd19491">
    <property type="entry name" value="XRCC3"/>
    <property type="match status" value="1"/>
</dbReference>
<dbReference type="FunFam" id="3.40.50.300:FF:001604">
    <property type="entry name" value="DNA repair protein XRCC3"/>
    <property type="match status" value="1"/>
</dbReference>
<dbReference type="Gene3D" id="3.40.50.300">
    <property type="entry name" value="P-loop containing nucleotide triphosphate hydrolases"/>
    <property type="match status" value="1"/>
</dbReference>
<dbReference type="InterPro" id="IPR013632">
    <property type="entry name" value="DNA_recomb/repair_Rad51_C"/>
</dbReference>
<dbReference type="InterPro" id="IPR016467">
    <property type="entry name" value="DNA_recomb/repair_RecA-like"/>
</dbReference>
<dbReference type="InterPro" id="IPR027417">
    <property type="entry name" value="P-loop_NTPase"/>
</dbReference>
<dbReference type="InterPro" id="IPR020588">
    <property type="entry name" value="RecA_ATP-bd"/>
</dbReference>
<dbReference type="InterPro" id="IPR047348">
    <property type="entry name" value="XRCC3-like_C"/>
</dbReference>
<dbReference type="PANTHER" id="PTHR46487">
    <property type="entry name" value="DNA REPAIR PROTEIN XRCC3"/>
    <property type="match status" value="1"/>
</dbReference>
<dbReference type="PANTHER" id="PTHR46487:SF1">
    <property type="entry name" value="DNA REPAIR PROTEIN XRCC3"/>
    <property type="match status" value="1"/>
</dbReference>
<dbReference type="Pfam" id="PF08423">
    <property type="entry name" value="Rad51"/>
    <property type="match status" value="1"/>
</dbReference>
<dbReference type="PIRSF" id="PIRSF005856">
    <property type="entry name" value="Rad51"/>
    <property type="match status" value="1"/>
</dbReference>
<dbReference type="SUPFAM" id="SSF52540">
    <property type="entry name" value="P-loop containing nucleoside triphosphate hydrolases"/>
    <property type="match status" value="1"/>
</dbReference>
<dbReference type="PROSITE" id="PS50162">
    <property type="entry name" value="RECA_2"/>
    <property type="match status" value="1"/>
</dbReference>
<keyword id="KW-0067">ATP-binding</keyword>
<keyword id="KW-0227">DNA damage</keyword>
<keyword id="KW-0233">DNA recombination</keyword>
<keyword id="KW-0234">DNA repair</keyword>
<keyword id="KW-0238">DNA-binding</keyword>
<keyword id="KW-0547">Nucleotide-binding</keyword>
<keyword id="KW-0539">Nucleus</keyword>
<keyword id="KW-1185">Reference proteome</keyword>
<sequence>MQNGKIKPENLLRRSPTNRKLTTGCEILDGCLRGGISCDSLTEIVAESGCGKTQLCLQLSLCTQLPISHGGLNGSSLYLHSEFPFPFRRLHQLSHTFHQSNPSIYANYNDNPCDHVFVQNVHSVDHLFDIMPRIDGFVGNSKTRFPLKLIVLDSVAALFRSEFDNTPSDLKKRSSLFFKISGKLKQLASKFDLAIVITNQVTDLVETSDGLSGLRIGNLRYLYSSGRRVVPSLGLAWANCVNSRFFISRSDGSIVKDRSEKDENCSSSVSRSAKRRLDIVFSPYLPGSSCEFMITREGICAVQA</sequence>
<accession>Q9FKM5</accession>
<organism>
    <name type="scientific">Arabidopsis thaliana</name>
    <name type="common">Mouse-ear cress</name>
    <dbReference type="NCBI Taxonomy" id="3702"/>
    <lineage>
        <taxon>Eukaryota</taxon>
        <taxon>Viridiplantae</taxon>
        <taxon>Streptophyta</taxon>
        <taxon>Embryophyta</taxon>
        <taxon>Tracheophyta</taxon>
        <taxon>Spermatophyta</taxon>
        <taxon>Magnoliopsida</taxon>
        <taxon>eudicotyledons</taxon>
        <taxon>Gunneridae</taxon>
        <taxon>Pentapetalae</taxon>
        <taxon>rosids</taxon>
        <taxon>malvids</taxon>
        <taxon>Brassicales</taxon>
        <taxon>Brassicaceae</taxon>
        <taxon>Camelineae</taxon>
        <taxon>Arabidopsis</taxon>
    </lineage>
</organism>
<feature type="chain" id="PRO_0000122953" description="DNA repair protein XRCC3 homolog">
    <location>
        <begin position="1"/>
        <end position="304"/>
    </location>
</feature>
<feature type="binding site" evidence="1">
    <location>
        <begin position="46"/>
        <end position="53"/>
    </location>
    <ligand>
        <name>ATP</name>
        <dbReference type="ChEBI" id="CHEBI:30616"/>
    </ligand>
</feature>
<protein>
    <recommendedName>
        <fullName>DNA repair protein XRCC3 homolog</fullName>
    </recommendedName>
    <alternativeName>
        <fullName>X-ray repair cross-complementing protein 3 homolog</fullName>
        <shortName>AtXRCC3</shortName>
    </alternativeName>
</protein>
<gene>
    <name type="primary">XRCC3</name>
    <name type="ordered locus">At5g57450</name>
    <name type="ORF">MUA2.3</name>
</gene>